<reference key="1">
    <citation type="submission" date="1990-11" db="EMBL/GenBank/DDBJ databases">
        <authorList>
            <person name="Burger J.T."/>
            <person name="Brand R.J."/>
            <person name="Rybicki E.P."/>
        </authorList>
    </citation>
    <scope>NUCLEOTIDE SEQUENCE [GENOMIC RNA]</scope>
</reference>
<reference key="2">
    <citation type="journal article" date="2001" name="Virus Res.">
        <title>Potyvirus proteins: a wealth of functions.</title>
        <authorList>
            <person name="Urcuqui-Inchima S."/>
            <person name="Haenni A.L."/>
            <person name="Bernardi F."/>
        </authorList>
    </citation>
    <scope>REVIEW</scope>
</reference>
<organism>
    <name type="scientific">Ornithogalum mosaic virus</name>
    <dbReference type="NCBI Taxonomy" id="12204"/>
    <lineage>
        <taxon>Viruses</taxon>
        <taxon>Riboviria</taxon>
        <taxon>Orthornavirae</taxon>
        <taxon>Pisuviricota</taxon>
        <taxon>Stelpaviricetes</taxon>
        <taxon>Patatavirales</taxon>
        <taxon>Potyviridae</taxon>
        <taxon>Potyvirus</taxon>
        <taxon>Potyvirus ornithogalitessellati</taxon>
    </lineage>
</organism>
<evidence type="ECO:0000250" key="1"/>
<evidence type="ECO:0000250" key="2">
    <source>
        <dbReference type="UniProtKB" id="P04517"/>
    </source>
</evidence>
<evidence type="ECO:0000250" key="3">
    <source>
        <dbReference type="UniProtKB" id="P09814"/>
    </source>
</evidence>
<evidence type="ECO:0000250" key="4">
    <source>
        <dbReference type="UniProtKB" id="P18247"/>
    </source>
</evidence>
<evidence type="ECO:0000250" key="5">
    <source>
        <dbReference type="UniProtKB" id="P21231"/>
    </source>
</evidence>
<evidence type="ECO:0000255" key="6">
    <source>
        <dbReference type="PROSITE-ProRule" id="PRU00539"/>
    </source>
</evidence>
<evidence type="ECO:0000255" key="7">
    <source>
        <dbReference type="PROSITE-ProRule" id="PRU00766"/>
    </source>
</evidence>
<evidence type="ECO:0000305" key="8"/>
<protein>
    <recommendedName>
        <fullName>Genome polyprotein</fullName>
    </recommendedName>
    <component>
        <recommendedName>
            <fullName>Viral genome-linked protein</fullName>
        </recommendedName>
        <alternativeName>
            <fullName>VPg</fullName>
        </alternativeName>
    </component>
    <component>
        <recommendedName>
            <fullName>Nuclear inclusion protein A</fullName>
            <shortName>NI-A</shortName>
            <shortName>NIA</shortName>
            <ecNumber>3.4.22.44</ecNumber>
        </recommendedName>
        <alternativeName>
            <fullName>49 kDa proteinase</fullName>
            <shortName>49 kDa-Pro</shortName>
        </alternativeName>
    </component>
    <component>
        <recommendedName>
            <fullName>Nuclear inclusion protein B</fullName>
            <shortName>NI-B</shortName>
            <shortName>NIB</shortName>
        </recommendedName>
        <alternativeName>
            <fullName>RNA-directed RNA polymerase</fullName>
            <ecNumber>2.7.7.48</ecNumber>
        </alternativeName>
    </component>
    <component>
        <recommendedName>
            <fullName>Capsid protein</fullName>
            <shortName>CP</shortName>
        </recommendedName>
        <alternativeName>
            <fullName>Coat protein</fullName>
        </alternativeName>
    </component>
</protein>
<dbReference type="EC" id="3.4.22.44"/>
<dbReference type="EC" id="2.7.7.48"/>
<dbReference type="EMBL" id="D00615">
    <property type="protein sequence ID" value="BAA00490.1"/>
    <property type="molecule type" value="Genomic_RNA"/>
</dbReference>
<dbReference type="PIR" id="JQ0494">
    <property type="entry name" value="JQ0494"/>
</dbReference>
<dbReference type="MEROPS" id="C04.005"/>
<dbReference type="GO" id="GO:0042025">
    <property type="term" value="C:host cell nucleus"/>
    <property type="evidence" value="ECO:0007669"/>
    <property type="project" value="UniProtKB-SubCell"/>
</dbReference>
<dbReference type="GO" id="GO:0019028">
    <property type="term" value="C:viral capsid"/>
    <property type="evidence" value="ECO:0007669"/>
    <property type="project" value="UniProtKB-KW"/>
</dbReference>
<dbReference type="GO" id="GO:0008234">
    <property type="term" value="F:cysteine-type peptidase activity"/>
    <property type="evidence" value="ECO:0007669"/>
    <property type="project" value="UniProtKB-KW"/>
</dbReference>
<dbReference type="GO" id="GO:0000166">
    <property type="term" value="F:nucleotide binding"/>
    <property type="evidence" value="ECO:0007669"/>
    <property type="project" value="UniProtKB-KW"/>
</dbReference>
<dbReference type="GO" id="GO:0003723">
    <property type="term" value="F:RNA binding"/>
    <property type="evidence" value="ECO:0007669"/>
    <property type="project" value="InterPro"/>
</dbReference>
<dbReference type="GO" id="GO:0003968">
    <property type="term" value="F:RNA-directed RNA polymerase activity"/>
    <property type="evidence" value="ECO:0007669"/>
    <property type="project" value="UniProtKB-KW"/>
</dbReference>
<dbReference type="GO" id="GO:0006351">
    <property type="term" value="P:DNA-templated transcription"/>
    <property type="evidence" value="ECO:0007669"/>
    <property type="project" value="InterPro"/>
</dbReference>
<dbReference type="GO" id="GO:0006508">
    <property type="term" value="P:proteolysis"/>
    <property type="evidence" value="ECO:0007669"/>
    <property type="project" value="UniProtKB-KW"/>
</dbReference>
<dbReference type="GO" id="GO:0039694">
    <property type="term" value="P:viral RNA genome replication"/>
    <property type="evidence" value="ECO:0007669"/>
    <property type="project" value="InterPro"/>
</dbReference>
<dbReference type="CDD" id="cd23175">
    <property type="entry name" value="ps-ssRNAv_Potyviridae_RdRp"/>
    <property type="match status" value="1"/>
</dbReference>
<dbReference type="Gene3D" id="3.30.70.270">
    <property type="match status" value="1"/>
</dbReference>
<dbReference type="Gene3D" id="2.40.10.10">
    <property type="entry name" value="Trypsin-like serine proteases"/>
    <property type="match status" value="2"/>
</dbReference>
<dbReference type="InterPro" id="IPR043502">
    <property type="entry name" value="DNA/RNA_pol_sf"/>
</dbReference>
<dbReference type="InterPro" id="IPR009003">
    <property type="entry name" value="Peptidase_S1_PA"/>
</dbReference>
<dbReference type="InterPro" id="IPR043504">
    <property type="entry name" value="Peptidase_S1_PA_chymotrypsin"/>
</dbReference>
<dbReference type="InterPro" id="IPR001592">
    <property type="entry name" value="Poty_coat"/>
</dbReference>
<dbReference type="InterPro" id="IPR001730">
    <property type="entry name" value="Potyv_NIa-pro_dom"/>
</dbReference>
<dbReference type="InterPro" id="IPR043128">
    <property type="entry name" value="Rev_trsase/Diguanyl_cyclase"/>
</dbReference>
<dbReference type="InterPro" id="IPR001205">
    <property type="entry name" value="RNA-dir_pol_C"/>
</dbReference>
<dbReference type="InterPro" id="IPR007094">
    <property type="entry name" value="RNA-dir_pol_PSvirus"/>
</dbReference>
<dbReference type="Pfam" id="PF00863">
    <property type="entry name" value="Peptidase_C4"/>
    <property type="match status" value="1"/>
</dbReference>
<dbReference type="Pfam" id="PF00767">
    <property type="entry name" value="Poty_coat"/>
    <property type="match status" value="1"/>
</dbReference>
<dbReference type="Pfam" id="PF00680">
    <property type="entry name" value="RdRP_1"/>
    <property type="match status" value="1"/>
</dbReference>
<dbReference type="PRINTS" id="PR00966">
    <property type="entry name" value="NIAPOTYPTASE"/>
</dbReference>
<dbReference type="SUPFAM" id="SSF56672">
    <property type="entry name" value="DNA/RNA polymerases"/>
    <property type="match status" value="1"/>
</dbReference>
<dbReference type="SUPFAM" id="SSF50494">
    <property type="entry name" value="Trypsin-like serine proteases"/>
    <property type="match status" value="1"/>
</dbReference>
<dbReference type="PROSITE" id="PS51436">
    <property type="entry name" value="POTYVIRUS_NIA_PRO"/>
    <property type="match status" value="1"/>
</dbReference>
<dbReference type="PROSITE" id="PS50507">
    <property type="entry name" value="RDRP_SSRNA_POS"/>
    <property type="match status" value="1"/>
</dbReference>
<keyword id="KW-0167">Capsid protein</keyword>
<keyword id="KW-1048">Host nucleus</keyword>
<keyword id="KW-0378">Hydrolase</keyword>
<keyword id="KW-0547">Nucleotide-binding</keyword>
<keyword id="KW-0548">Nucleotidyltransferase</keyword>
<keyword id="KW-0645">Protease</keyword>
<keyword id="KW-0696">RNA-directed RNA polymerase</keyword>
<keyword id="KW-0788">Thiol protease</keyword>
<keyword id="KW-0808">Transferase</keyword>
<keyword id="KW-0693">Viral RNA replication</keyword>
<keyword id="KW-0946">Virion</keyword>
<proteinExistence type="inferred from homology"/>
<accession>P20234</accession>
<name>POLG_OMV</name>
<comment type="function">
    <molecule>Viral genome-linked protein</molecule>
    <text evidence="4">Mediates the cap-independent, EIF4E-dependent translation of viral genomic RNAs (By similarity). Binds to the cap-binding site of host EIF4E and thus interferes with the host EIF4E-dependent mRNA export and translation (By similarity). VPg-RNA directly binds EIF4E and is a template for transcription (By similarity). Also forms trimeric complexes with EIF4E-EIF4G, which are templates for translation (By similarity).</text>
</comment>
<comment type="function">
    <molecule>Nuclear inclusion protein A</molecule>
    <text evidence="2">Has RNA-binding and proteolytic activities.</text>
</comment>
<comment type="function">
    <molecule>Nuclear inclusion protein B</molecule>
    <text>An RNA-dependent RNA polymerase that plays an essential role in the virus replication.</text>
</comment>
<comment type="function">
    <molecule>Capsid protein</molecule>
    <text evidence="2">Involved in aphid transmission, cell-to-cell and systemis movement, encapsidation of the viral RNA and in the regulation of viral RNA amplification.</text>
</comment>
<comment type="catalytic activity">
    <reaction evidence="2">
        <text>Hydrolyzes glutaminyl bonds, and activity is further restricted by preferences for the amino acids in P6 - P1' that vary with the species of potyvirus, e.g. Glu-Xaa-Xaa-Tyr-Xaa-Gln-|-(Ser or Gly) for the enzyme from tobacco etch virus. The natural substrate is the viral polyprotein, but other proteins and oligopeptides containing the appropriate consensus sequence are also cleaved.</text>
        <dbReference type="EC" id="3.4.22.44"/>
    </reaction>
</comment>
<comment type="catalytic activity">
    <reaction evidence="6">
        <text>RNA(n) + a ribonucleoside 5'-triphosphate = RNA(n+1) + diphosphate</text>
        <dbReference type="Rhea" id="RHEA:21248"/>
        <dbReference type="Rhea" id="RHEA-COMP:14527"/>
        <dbReference type="Rhea" id="RHEA-COMP:17342"/>
        <dbReference type="ChEBI" id="CHEBI:33019"/>
        <dbReference type="ChEBI" id="CHEBI:61557"/>
        <dbReference type="ChEBI" id="CHEBI:140395"/>
        <dbReference type="EC" id="2.7.7.48"/>
    </reaction>
</comment>
<comment type="subunit">
    <molecule>Viral genome-linked protein</molecule>
    <text evidence="4">Interacts with host eIF4E protein (via cap-binding region); this interaction mediates the translation of the VPg-viral RNA conjugates (By similarity). Part of a complex that comprises VPg, RNA, host EIF4E and EIF4G; this interaction mediates the translation of the VPg-viral RNA conjugates (By similarity).</text>
</comment>
<comment type="subcellular location">
    <molecule>Viral genome-linked protein</molecule>
    <subcellularLocation>
        <location evidence="5">Host nucleus</location>
    </subcellularLocation>
    <text evidence="5">Binds to host plant eIF4E proteins in the host nucleus.</text>
</comment>
<comment type="subcellular location">
    <molecule>Capsid protein</molecule>
    <subcellularLocation>
        <location evidence="8">Virion</location>
    </subcellularLocation>
</comment>
<comment type="PTM">
    <molecule>Viral genome-linked protein</molecule>
    <text evidence="3">VPg is uridylylated by the polymerase and is covalently attached to the 5'-end of the genomic RNA. This uridylylated form acts as a nucleotide-peptide primer for the polymerase (By similarity).</text>
</comment>
<comment type="PTM">
    <molecule>Genome polyprotein</molecule>
    <text evidence="1">Genome polyprotein of potyviruses undergoes post-translational proteolytic processing by the main proteinase NIa-pro resulting in the production of at least ten individual proteins. The P1 proteinase and the HC-pro cleave only their respective C-termini autocatalytically. 6K1 is essential for proper proteolytic separation of P3 from CI (By similarity).</text>
</comment>
<comment type="similarity">
    <text evidence="8">Belongs to the potyviridae genome polyprotein family.</text>
</comment>
<organismHost>
    <name type="scientific">Lachenalia</name>
    <dbReference type="NCBI Taxonomy" id="81765"/>
</organismHost>
<organismHost>
    <name type="scientific">Ornithogalum</name>
    <dbReference type="NCBI Taxonomy" id="51466"/>
</organismHost>
<feature type="chain" id="PRO_0000040291" description="Viral genome-linked protein" evidence="1">
    <location>
        <begin position="1" status="less than"/>
        <end position="122"/>
    </location>
</feature>
<feature type="chain" id="PRO_0000420002" description="Genome polyprotein">
    <location>
        <begin position="1"/>
        <end position="1136"/>
    </location>
</feature>
<feature type="chain" id="PRO_0000040292" description="Nuclear inclusion protein A" evidence="1">
    <location>
        <begin position="123"/>
        <end position="365"/>
    </location>
</feature>
<feature type="chain" id="PRO_0000040293" description="Nuclear inclusion protein B" evidence="1">
    <location>
        <begin position="366"/>
        <end position="883"/>
    </location>
</feature>
<feature type="chain" id="PRO_0000040294" description="Capsid protein" evidence="1">
    <location>
        <begin position="884"/>
        <end position="1136"/>
    </location>
</feature>
<feature type="domain" description="Peptidase C4" evidence="7">
    <location>
        <begin position="123"/>
        <end position="341"/>
    </location>
</feature>
<feature type="domain" description="RdRp catalytic" evidence="6">
    <location>
        <begin position="607"/>
        <end position="731"/>
    </location>
</feature>
<feature type="active site" description="For nuclear inclusion protein A activity" evidence="7">
    <location>
        <position position="168"/>
    </location>
</feature>
<feature type="active site" description="For nuclear inclusion protein A activity" evidence="7">
    <location>
        <position position="203"/>
    </location>
</feature>
<feature type="active site" description="For nuclear inclusion protein A activity" evidence="7">
    <location>
        <position position="273"/>
    </location>
</feature>
<feature type="site" description="Cleavage; by NIa-pro" evidence="1">
    <location>
        <begin position="122"/>
        <end position="123"/>
    </location>
</feature>
<feature type="site" description="Cleavage; by NIa-pro" evidence="1">
    <location>
        <begin position="365"/>
        <end position="366"/>
    </location>
</feature>
<feature type="site" description="Cleavage; by NIa-pro" evidence="1">
    <location>
        <begin position="883"/>
        <end position="884"/>
    </location>
</feature>
<feature type="non-terminal residue">
    <location>
        <position position="1"/>
    </location>
</feature>
<sequence length="1136" mass="128915">EYTIVRYVDPLTGATQDENPLMAIDLVQEYFAKIRSQLVSEEKLETQNIIANPGIQAYYMKNRGDAALKVDLTPHNPLLVTKTGTIAGFPENEFILRQTGKAVNVKMSEVPVENELEEVEHEGKNLNRGLRDYNVVSNVVCRLTNESDGHSASLFGLGYGGYIITNRHLFKNNNGTLKVQSQHGDFIVKNTTQLKMVPVGKTDILIIRMPKDFPVLPQKLRFRAPANEDKVCLIASNFQERYVSSLVSETSSVYPVGNGEFWQHWISTKDGHCGLPLTSTKDGFIVGIHSLSTITNSKNFFASIPANFEEQYLAKLDQQDWTANWKYNPNEVSWNGLRLQENKPGRIFQAVKEVSALFSDAVYEQGQEVGWLFRELKDNLKAVAVLPNQLVTKHVVKGPCQCFIQYLNESPEASAFFKPLMGQYGKSILSKEAFVKDIMKYSKPIVLGEVDFIKFEEGYNNVLRMFHDIGFEKCEYVTDSMEVYKNLNLKAAVGAMYTGKKQQYFEGMSEDEIHQLVIASCFRLWSGKFGVWNGSLKAELRPLEKVQACKTRTFTAAPLDTLLGAKVCVDDFNAQFYDKHLTAPWTVGICKYYKGWDTFMNKLPEGWLYCDADGSQFDSSLTPFLINSVLRLRLEFMEDWDIGARMLSNLYTEIIYTPIATPDGTVVKKFRGNNSGQPSTVVDNTLMVVLAMNYALAKLSIPYEEMDSRIRYFANGDDLLVAVEPTKGGEILDSLQASFSELGLIYDFNDRTFDKTQLSFMSHQALWDGDMFIPKIKQERVVSILEWDRSTQPEHRIEAVCAAMIEAWGYPELLQEIRKFYAFMVTQEPYSAIHAQGKTRYISERALVTLYKDEKVVLSDIGPYIQKLAEMSLGCVDEVVMHQADSMDAGGSSRPPAPLVRQQDQDVNVGTFSVARVKALSDKMMLPKVRGKTVLNLQHLVQYNPEQTEISNTRATRTQFNNWYDRVRDSYGVTDDQMAVILNGLMVWCIENGTSPNLNGNWTMMDGDEQIEYPLQPVLENAQPTFRQIMAHFSNAAEAYIEKRNSEQRYMPRYGSQRNLNDYSLARYAFDFYEMTSRTANRAREAHIQMKAAALRNTKTKLFGLDGKVGTEEEDTERHVASDVNRNMHSLLGVNM</sequence>